<evidence type="ECO:0000250" key="1"/>
<evidence type="ECO:0000255" key="2"/>
<evidence type="ECO:0000255" key="3">
    <source>
        <dbReference type="PROSITE-ProRule" id="PRU00102"/>
    </source>
</evidence>
<evidence type="ECO:0000255" key="4">
    <source>
        <dbReference type="PROSITE-ProRule" id="PRU00107"/>
    </source>
</evidence>
<evidence type="ECO:0000256" key="5">
    <source>
        <dbReference type="SAM" id="MobiDB-lite"/>
    </source>
</evidence>
<evidence type="ECO:0000305" key="6"/>
<accession>Q742C0</accession>
<feature type="chain" id="PRO_0000308435" description="Signal transduction histidine-protein kinase/phosphatase MprB">
    <location>
        <begin position="1"/>
        <end position="522"/>
    </location>
</feature>
<feature type="topological domain" description="Cytoplasmic" evidence="2">
    <location>
        <begin position="1"/>
        <end position="30"/>
    </location>
</feature>
<feature type="transmembrane region" description="Helical" evidence="2">
    <location>
        <begin position="31"/>
        <end position="51"/>
    </location>
</feature>
<feature type="topological domain" description="Extracellular" evidence="2">
    <location>
        <begin position="52"/>
        <end position="167"/>
    </location>
</feature>
<feature type="transmembrane region" description="Helical" evidence="2">
    <location>
        <begin position="168"/>
        <end position="188"/>
    </location>
</feature>
<feature type="topological domain" description="Cytoplasmic" evidence="2">
    <location>
        <begin position="189"/>
        <end position="522"/>
    </location>
</feature>
<feature type="domain" description="HAMP" evidence="3">
    <location>
        <begin position="190"/>
        <end position="242"/>
    </location>
</feature>
<feature type="domain" description="Histidine kinase" evidence="4">
    <location>
        <begin position="250"/>
        <end position="470"/>
    </location>
</feature>
<feature type="region of interest" description="Disordered" evidence="5">
    <location>
        <begin position="467"/>
        <end position="522"/>
    </location>
</feature>
<feature type="compositionally biased region" description="Polar residues" evidence="5">
    <location>
        <begin position="502"/>
        <end position="522"/>
    </location>
</feature>
<feature type="modified residue" description="Phosphohistidine; by autocatalysis" evidence="4">
    <location>
        <position position="253"/>
    </location>
</feature>
<organism>
    <name type="scientific">Mycolicibacterium paratuberculosis (strain ATCC BAA-968 / K-10)</name>
    <name type="common">Mycobacterium paratuberculosis</name>
    <dbReference type="NCBI Taxonomy" id="262316"/>
    <lineage>
        <taxon>Bacteria</taxon>
        <taxon>Bacillati</taxon>
        <taxon>Actinomycetota</taxon>
        <taxon>Actinomycetes</taxon>
        <taxon>Mycobacteriales</taxon>
        <taxon>Mycobacteriaceae</taxon>
        <taxon>Mycobacterium</taxon>
        <taxon>Mycobacterium avium complex (MAC)</taxon>
    </lineage>
</organism>
<gene>
    <name type="primary">mprB</name>
    <name type="ordered locus">MAP_0917</name>
</gene>
<dbReference type="EC" id="2.7.13.3"/>
<dbReference type="EC" id="3.1.3.-"/>
<dbReference type="EMBL" id="AE016958">
    <property type="protein sequence ID" value="AAS03234.1"/>
    <property type="status" value="ALT_INIT"/>
    <property type="molecule type" value="Genomic_DNA"/>
</dbReference>
<dbReference type="RefSeq" id="WP_003877497.1">
    <property type="nucleotide sequence ID" value="NZ_CP106873.1"/>
</dbReference>
<dbReference type="SMR" id="Q742C0"/>
<dbReference type="STRING" id="262316.MAP_0917"/>
<dbReference type="KEGG" id="mpa:MAP_0917"/>
<dbReference type="PATRIC" id="fig|262316.17.peg.958"/>
<dbReference type="eggNOG" id="COG2205">
    <property type="taxonomic scope" value="Bacteria"/>
</dbReference>
<dbReference type="HOGENOM" id="CLU_000445_89_6_11"/>
<dbReference type="Proteomes" id="UP000000580">
    <property type="component" value="Chromosome"/>
</dbReference>
<dbReference type="GO" id="GO:0005886">
    <property type="term" value="C:plasma membrane"/>
    <property type="evidence" value="ECO:0007669"/>
    <property type="project" value="UniProtKB-SubCell"/>
</dbReference>
<dbReference type="GO" id="GO:0005524">
    <property type="term" value="F:ATP binding"/>
    <property type="evidence" value="ECO:0007669"/>
    <property type="project" value="UniProtKB-KW"/>
</dbReference>
<dbReference type="GO" id="GO:0004721">
    <property type="term" value="F:phosphoprotein phosphatase activity"/>
    <property type="evidence" value="ECO:0007669"/>
    <property type="project" value="UniProtKB-KW"/>
</dbReference>
<dbReference type="GO" id="GO:0000155">
    <property type="term" value="F:phosphorelay sensor kinase activity"/>
    <property type="evidence" value="ECO:0007669"/>
    <property type="project" value="InterPro"/>
</dbReference>
<dbReference type="CDD" id="cd06225">
    <property type="entry name" value="HAMP"/>
    <property type="match status" value="1"/>
</dbReference>
<dbReference type="CDD" id="cd00075">
    <property type="entry name" value="HATPase"/>
    <property type="match status" value="1"/>
</dbReference>
<dbReference type="CDD" id="cd00082">
    <property type="entry name" value="HisKA"/>
    <property type="match status" value="1"/>
</dbReference>
<dbReference type="FunFam" id="1.10.287.130:FF:000031">
    <property type="entry name" value="Two-component sensor histidine kinase"/>
    <property type="match status" value="1"/>
</dbReference>
<dbReference type="FunFam" id="3.30.565.10:FF:000066">
    <property type="entry name" value="Two-component sensor kinase MprB"/>
    <property type="match status" value="1"/>
</dbReference>
<dbReference type="Gene3D" id="1.10.287.130">
    <property type="match status" value="1"/>
</dbReference>
<dbReference type="Gene3D" id="6.10.340.10">
    <property type="match status" value="1"/>
</dbReference>
<dbReference type="Gene3D" id="3.30.565.10">
    <property type="entry name" value="Histidine kinase-like ATPase, C-terminal domain"/>
    <property type="match status" value="1"/>
</dbReference>
<dbReference type="InterPro" id="IPR050980">
    <property type="entry name" value="2C_sensor_his_kinase"/>
</dbReference>
<dbReference type="InterPro" id="IPR003660">
    <property type="entry name" value="HAMP_dom"/>
</dbReference>
<dbReference type="InterPro" id="IPR036890">
    <property type="entry name" value="HATPase_C_sf"/>
</dbReference>
<dbReference type="InterPro" id="IPR005467">
    <property type="entry name" value="His_kinase_dom"/>
</dbReference>
<dbReference type="InterPro" id="IPR003661">
    <property type="entry name" value="HisK_dim/P_dom"/>
</dbReference>
<dbReference type="InterPro" id="IPR036097">
    <property type="entry name" value="HisK_dim/P_sf"/>
</dbReference>
<dbReference type="InterPro" id="IPR004358">
    <property type="entry name" value="Sig_transdc_His_kin-like_C"/>
</dbReference>
<dbReference type="PANTHER" id="PTHR44936">
    <property type="entry name" value="SENSOR PROTEIN CREC"/>
    <property type="match status" value="1"/>
</dbReference>
<dbReference type="PANTHER" id="PTHR44936:SF9">
    <property type="entry name" value="SENSOR PROTEIN CREC"/>
    <property type="match status" value="1"/>
</dbReference>
<dbReference type="Pfam" id="PF00672">
    <property type="entry name" value="HAMP"/>
    <property type="match status" value="1"/>
</dbReference>
<dbReference type="Pfam" id="PF02518">
    <property type="entry name" value="HATPase_c"/>
    <property type="match status" value="1"/>
</dbReference>
<dbReference type="Pfam" id="PF00512">
    <property type="entry name" value="HisKA"/>
    <property type="match status" value="1"/>
</dbReference>
<dbReference type="PRINTS" id="PR00344">
    <property type="entry name" value="BCTRLSENSOR"/>
</dbReference>
<dbReference type="SMART" id="SM00304">
    <property type="entry name" value="HAMP"/>
    <property type="match status" value="1"/>
</dbReference>
<dbReference type="SMART" id="SM00387">
    <property type="entry name" value="HATPase_c"/>
    <property type="match status" value="1"/>
</dbReference>
<dbReference type="SMART" id="SM00388">
    <property type="entry name" value="HisKA"/>
    <property type="match status" value="1"/>
</dbReference>
<dbReference type="SUPFAM" id="SSF55874">
    <property type="entry name" value="ATPase domain of HSP90 chaperone/DNA topoisomerase II/histidine kinase"/>
    <property type="match status" value="1"/>
</dbReference>
<dbReference type="SUPFAM" id="SSF158472">
    <property type="entry name" value="HAMP domain-like"/>
    <property type="match status" value="1"/>
</dbReference>
<dbReference type="SUPFAM" id="SSF47384">
    <property type="entry name" value="Homodimeric domain of signal transducing histidine kinase"/>
    <property type="match status" value="1"/>
</dbReference>
<dbReference type="PROSITE" id="PS50885">
    <property type="entry name" value="HAMP"/>
    <property type="match status" value="1"/>
</dbReference>
<dbReference type="PROSITE" id="PS50109">
    <property type="entry name" value="HIS_KIN"/>
    <property type="match status" value="1"/>
</dbReference>
<name>MPRB_MYCPA</name>
<sequence>MIRLYRPQRPPLRAPLRATPSLSLRWRVMLLAMSMVAMVVVLMAFAVYAVISAALYSDIDNQLQSRAQLLIASGSLAADPGKAIEGTAYSDVNAMLVNPGHAIYTAQQPGQTLPVGSPEKAVIHGELFMSRRTAGDQRILAVHLQNGTSLLISKSLKPTEAVMNKLRWVLLIVGGVGVAVAAVAGGMVTRAGLRPVARLTEAAERVARTDDLRPIPVFGSDELARLTESFNLMLRALAESRERQARLVTDAGHELRTPLTSLRTNVELLMASMEPGAPRLPEQEMVELRADVLAQIEELSTLVGDLVDLTRDDAGQVVHEPVDMSDVIDRSLERVRRRRNDIHFDVDVTPWQMYGDAAGLSRAVLNLLDNAAKWSPPGGHVGVTMRQLDPSHVELVVSDHGPGIPPQERRLVFERFYRSTSARAMPGSGLGLAIVKKVVLNHGGMLRVEDTVPGGQPPGTSFYVLLPGRSLPPAGHSTPAGESETDQAEAATDPAVPVAGDTANSRESANVISVDSQSARAR</sequence>
<keyword id="KW-0067">ATP-binding</keyword>
<keyword id="KW-1003">Cell membrane</keyword>
<keyword id="KW-0378">Hydrolase</keyword>
<keyword id="KW-0418">Kinase</keyword>
<keyword id="KW-0460">Magnesium</keyword>
<keyword id="KW-0464">Manganese</keyword>
<keyword id="KW-0472">Membrane</keyword>
<keyword id="KW-0547">Nucleotide-binding</keyword>
<keyword id="KW-0597">Phosphoprotein</keyword>
<keyword id="KW-0904">Protein phosphatase</keyword>
<keyword id="KW-1185">Reference proteome</keyword>
<keyword id="KW-0346">Stress response</keyword>
<keyword id="KW-0808">Transferase</keyword>
<keyword id="KW-0812">Transmembrane</keyword>
<keyword id="KW-1133">Transmembrane helix</keyword>
<keyword id="KW-0902">Two-component regulatory system</keyword>
<keyword id="KW-0843">Virulence</keyword>
<protein>
    <recommendedName>
        <fullName>Signal transduction histidine-protein kinase/phosphatase MprB</fullName>
        <ecNumber>2.7.13.3</ecNumber>
        <ecNumber>3.1.3.-</ecNumber>
    </recommendedName>
    <alternativeName>
        <fullName>Mycobacterial persistence regulator B</fullName>
    </alternativeName>
</protein>
<proteinExistence type="inferred from homology"/>
<comment type="function">
    <text evidence="1">Member of the two-component regulatory system MprB/MprA which contributes to maintaining a balance among several systems involved in stress resistance and is required for establishment and maintenance of persistent infection in the host. In response to environmental signals MprB acts both as a membrane-associated protein kinase that undergoes autophosphorylation and subsequently transfers the phosphate to MprA, and a protein phosphatase that dephosphorylates phospho-MprA (By similarity).</text>
</comment>
<comment type="catalytic activity">
    <reaction>
        <text>ATP + protein L-histidine = ADP + protein N-phospho-L-histidine.</text>
        <dbReference type="EC" id="2.7.13.3"/>
    </reaction>
</comment>
<comment type="cofactor">
    <cofactor evidence="1">
        <name>Mg(2+)</name>
        <dbReference type="ChEBI" id="CHEBI:18420"/>
    </cofactor>
    <cofactor evidence="1">
        <name>Mn(2+)</name>
        <dbReference type="ChEBI" id="CHEBI:29035"/>
    </cofactor>
</comment>
<comment type="subcellular location">
    <subcellularLocation>
        <location evidence="6">Cell membrane</location>
        <topology evidence="6">Multi-pass membrane protein</topology>
    </subcellularLocation>
</comment>
<comment type="PTM">
    <text evidence="1">Autophosphorylated.</text>
</comment>
<comment type="sequence caution" evidence="6">
    <conflict type="erroneous initiation">
        <sequence resource="EMBL-CDS" id="AAS03234"/>
    </conflict>
</comment>
<reference key="1">
    <citation type="journal article" date="2005" name="Proc. Natl. Acad. Sci. U.S.A.">
        <title>The complete genome sequence of Mycobacterium avium subspecies paratuberculosis.</title>
        <authorList>
            <person name="Li L."/>
            <person name="Bannantine J.P."/>
            <person name="Zhang Q."/>
            <person name="Amonsin A."/>
            <person name="May B.J."/>
            <person name="Alt D."/>
            <person name="Banerji N."/>
            <person name="Kanjilal S."/>
            <person name="Kapur V."/>
        </authorList>
    </citation>
    <scope>NUCLEOTIDE SEQUENCE [LARGE SCALE GENOMIC DNA]</scope>
    <source>
        <strain>ATCC BAA-968 / K-10</strain>
    </source>
</reference>